<gene>
    <name evidence="1" type="primary">coaD</name>
    <name type="ordered locus">RSal33209_1778</name>
</gene>
<protein>
    <recommendedName>
        <fullName evidence="1">Phosphopantetheine adenylyltransferase</fullName>
        <ecNumber evidence="1">2.7.7.3</ecNumber>
    </recommendedName>
    <alternativeName>
        <fullName evidence="1">Dephospho-CoA pyrophosphorylase</fullName>
    </alternativeName>
    <alternativeName>
        <fullName evidence="1">Pantetheine-phosphate adenylyltransferase</fullName>
        <shortName evidence="1">PPAT</shortName>
    </alternativeName>
</protein>
<reference key="1">
    <citation type="journal article" date="2008" name="J. Bacteriol.">
        <title>Genome sequence of the fish pathogen Renibacterium salmoninarum suggests reductive evolution away from an environmental Arthrobacter ancestor.</title>
        <authorList>
            <person name="Wiens G.D."/>
            <person name="Rockey D.D."/>
            <person name="Wu Z."/>
            <person name="Chang J."/>
            <person name="Levy R."/>
            <person name="Crane S."/>
            <person name="Chen D.S."/>
            <person name="Capri G.R."/>
            <person name="Burnett J.R."/>
            <person name="Sudheesh P.S."/>
            <person name="Schipma M.J."/>
            <person name="Burd H."/>
            <person name="Bhattacharyya A."/>
            <person name="Rhodes L.D."/>
            <person name="Kaul R."/>
            <person name="Strom M.S."/>
        </authorList>
    </citation>
    <scope>NUCLEOTIDE SEQUENCE [LARGE SCALE GENOMIC DNA]</scope>
    <source>
        <strain>ATCC 33209 / DSM 20767 / JCM 11484 / NBRC 15589 / NCIMB 2235</strain>
    </source>
</reference>
<keyword id="KW-0067">ATP-binding</keyword>
<keyword id="KW-0173">Coenzyme A biosynthesis</keyword>
<keyword id="KW-0963">Cytoplasm</keyword>
<keyword id="KW-0460">Magnesium</keyword>
<keyword id="KW-0547">Nucleotide-binding</keyword>
<keyword id="KW-0548">Nucleotidyltransferase</keyword>
<keyword id="KW-1185">Reference proteome</keyword>
<keyword id="KW-0808">Transferase</keyword>
<dbReference type="EC" id="2.7.7.3" evidence="1"/>
<dbReference type="EMBL" id="CP000910">
    <property type="protein sequence ID" value="ABY23513.1"/>
    <property type="molecule type" value="Genomic_DNA"/>
</dbReference>
<dbReference type="RefSeq" id="WP_012245184.1">
    <property type="nucleotide sequence ID" value="NC_010168.1"/>
</dbReference>
<dbReference type="SMR" id="A9WMZ3"/>
<dbReference type="STRING" id="288705.RSal33209_1778"/>
<dbReference type="KEGG" id="rsa:RSal33209_1778"/>
<dbReference type="eggNOG" id="COG0669">
    <property type="taxonomic scope" value="Bacteria"/>
</dbReference>
<dbReference type="HOGENOM" id="CLU_100149_1_0_11"/>
<dbReference type="UniPathway" id="UPA00241">
    <property type="reaction ID" value="UER00355"/>
</dbReference>
<dbReference type="Proteomes" id="UP000002007">
    <property type="component" value="Chromosome"/>
</dbReference>
<dbReference type="GO" id="GO:0005737">
    <property type="term" value="C:cytoplasm"/>
    <property type="evidence" value="ECO:0007669"/>
    <property type="project" value="UniProtKB-SubCell"/>
</dbReference>
<dbReference type="GO" id="GO:0005524">
    <property type="term" value="F:ATP binding"/>
    <property type="evidence" value="ECO:0007669"/>
    <property type="project" value="UniProtKB-KW"/>
</dbReference>
<dbReference type="GO" id="GO:0004595">
    <property type="term" value="F:pantetheine-phosphate adenylyltransferase activity"/>
    <property type="evidence" value="ECO:0007669"/>
    <property type="project" value="UniProtKB-UniRule"/>
</dbReference>
<dbReference type="GO" id="GO:0015937">
    <property type="term" value="P:coenzyme A biosynthetic process"/>
    <property type="evidence" value="ECO:0007669"/>
    <property type="project" value="UniProtKB-UniRule"/>
</dbReference>
<dbReference type="CDD" id="cd02163">
    <property type="entry name" value="PPAT"/>
    <property type="match status" value="1"/>
</dbReference>
<dbReference type="Gene3D" id="3.40.50.620">
    <property type="entry name" value="HUPs"/>
    <property type="match status" value="1"/>
</dbReference>
<dbReference type="HAMAP" id="MF_00151">
    <property type="entry name" value="PPAT_bact"/>
    <property type="match status" value="1"/>
</dbReference>
<dbReference type="InterPro" id="IPR004821">
    <property type="entry name" value="Cyt_trans-like"/>
</dbReference>
<dbReference type="InterPro" id="IPR001980">
    <property type="entry name" value="PPAT"/>
</dbReference>
<dbReference type="InterPro" id="IPR014729">
    <property type="entry name" value="Rossmann-like_a/b/a_fold"/>
</dbReference>
<dbReference type="NCBIfam" id="TIGR01510">
    <property type="entry name" value="coaD_prev_kdtB"/>
    <property type="match status" value="1"/>
</dbReference>
<dbReference type="NCBIfam" id="TIGR00125">
    <property type="entry name" value="cyt_tran_rel"/>
    <property type="match status" value="1"/>
</dbReference>
<dbReference type="PANTHER" id="PTHR21342">
    <property type="entry name" value="PHOSPHOPANTETHEINE ADENYLYLTRANSFERASE"/>
    <property type="match status" value="1"/>
</dbReference>
<dbReference type="PANTHER" id="PTHR21342:SF1">
    <property type="entry name" value="PHOSPHOPANTETHEINE ADENYLYLTRANSFERASE"/>
    <property type="match status" value="1"/>
</dbReference>
<dbReference type="Pfam" id="PF01467">
    <property type="entry name" value="CTP_transf_like"/>
    <property type="match status" value="1"/>
</dbReference>
<dbReference type="PRINTS" id="PR01020">
    <property type="entry name" value="LPSBIOSNTHSS"/>
</dbReference>
<dbReference type="SUPFAM" id="SSF52374">
    <property type="entry name" value="Nucleotidylyl transferase"/>
    <property type="match status" value="1"/>
</dbReference>
<proteinExistence type="inferred from homology"/>
<organism>
    <name type="scientific">Renibacterium salmoninarum (strain ATCC 33209 / DSM 20767 / JCM 11484 / NBRC 15589 / NCIMB 2235)</name>
    <dbReference type="NCBI Taxonomy" id="288705"/>
    <lineage>
        <taxon>Bacteria</taxon>
        <taxon>Bacillati</taxon>
        <taxon>Actinomycetota</taxon>
        <taxon>Actinomycetes</taxon>
        <taxon>Micrococcales</taxon>
        <taxon>Micrococcaceae</taxon>
        <taxon>Renibacterium</taxon>
    </lineage>
</organism>
<name>COAD_RENSM</name>
<comment type="function">
    <text evidence="1">Reversibly transfers an adenylyl group from ATP to 4'-phosphopantetheine, yielding dephospho-CoA (dPCoA) and pyrophosphate.</text>
</comment>
<comment type="catalytic activity">
    <reaction evidence="1">
        <text>(R)-4'-phosphopantetheine + ATP + H(+) = 3'-dephospho-CoA + diphosphate</text>
        <dbReference type="Rhea" id="RHEA:19801"/>
        <dbReference type="ChEBI" id="CHEBI:15378"/>
        <dbReference type="ChEBI" id="CHEBI:30616"/>
        <dbReference type="ChEBI" id="CHEBI:33019"/>
        <dbReference type="ChEBI" id="CHEBI:57328"/>
        <dbReference type="ChEBI" id="CHEBI:61723"/>
        <dbReference type="EC" id="2.7.7.3"/>
    </reaction>
</comment>
<comment type="cofactor">
    <cofactor evidence="1">
        <name>Mg(2+)</name>
        <dbReference type="ChEBI" id="CHEBI:18420"/>
    </cofactor>
</comment>
<comment type="pathway">
    <text evidence="1">Cofactor biosynthesis; coenzyme A biosynthesis; CoA from (R)-pantothenate: step 4/5.</text>
</comment>
<comment type="subunit">
    <text evidence="1">Homohexamer.</text>
</comment>
<comment type="subcellular location">
    <subcellularLocation>
        <location evidence="1">Cytoplasm</location>
    </subcellularLocation>
</comment>
<comment type="similarity">
    <text evidence="1">Belongs to the bacterial CoaD family.</text>
</comment>
<accession>A9WMZ3</accession>
<evidence type="ECO:0000255" key="1">
    <source>
        <dbReference type="HAMAP-Rule" id="MF_00151"/>
    </source>
</evidence>
<sequence>MRRAVCPGSLDPIHNGHLEVIARAAGLFDEVIVAVSTNYAKKYRFSLEERLEMASETLASLRGIVIEPMGAGLLAEYCRQRGASAIVKGIRSSSDFDYEVPMATMNRQLTGVETVFLPAEARYLHLSSTMIKEVEGLGGDVSDYVPRAVLRRFHEGKETN</sequence>
<feature type="chain" id="PRO_1000076777" description="Phosphopantetheine adenylyltransferase">
    <location>
        <begin position="1"/>
        <end position="160"/>
    </location>
</feature>
<feature type="binding site" evidence="1">
    <location>
        <begin position="9"/>
        <end position="10"/>
    </location>
    <ligand>
        <name>ATP</name>
        <dbReference type="ChEBI" id="CHEBI:30616"/>
    </ligand>
</feature>
<feature type="binding site" evidence="1">
    <location>
        <position position="9"/>
    </location>
    <ligand>
        <name>substrate</name>
    </ligand>
</feature>
<feature type="binding site" evidence="1">
    <location>
        <position position="17"/>
    </location>
    <ligand>
        <name>ATP</name>
        <dbReference type="ChEBI" id="CHEBI:30616"/>
    </ligand>
</feature>
<feature type="binding site" evidence="1">
    <location>
        <position position="41"/>
    </location>
    <ligand>
        <name>substrate</name>
    </ligand>
</feature>
<feature type="binding site" evidence="1">
    <location>
        <position position="74"/>
    </location>
    <ligand>
        <name>substrate</name>
    </ligand>
</feature>
<feature type="binding site" evidence="1">
    <location>
        <position position="88"/>
    </location>
    <ligand>
        <name>substrate</name>
    </ligand>
</feature>
<feature type="binding site" evidence="1">
    <location>
        <begin position="89"/>
        <end position="91"/>
    </location>
    <ligand>
        <name>ATP</name>
        <dbReference type="ChEBI" id="CHEBI:30616"/>
    </ligand>
</feature>
<feature type="binding site" evidence="1">
    <location>
        <position position="99"/>
    </location>
    <ligand>
        <name>ATP</name>
        <dbReference type="ChEBI" id="CHEBI:30616"/>
    </ligand>
</feature>
<feature type="binding site" evidence="1">
    <location>
        <begin position="123"/>
        <end position="129"/>
    </location>
    <ligand>
        <name>ATP</name>
        <dbReference type="ChEBI" id="CHEBI:30616"/>
    </ligand>
</feature>
<feature type="site" description="Transition state stabilizer" evidence="1">
    <location>
        <position position="17"/>
    </location>
</feature>